<accession>A7MP70</accession>
<reference key="1">
    <citation type="journal article" date="2010" name="PLoS ONE">
        <title>Genome sequence of Cronobacter sakazakii BAA-894 and comparative genomic hybridization analysis with other Cronobacter species.</title>
        <authorList>
            <person name="Kucerova E."/>
            <person name="Clifton S.W."/>
            <person name="Xia X.Q."/>
            <person name="Long F."/>
            <person name="Porwollik S."/>
            <person name="Fulton L."/>
            <person name="Fronick C."/>
            <person name="Minx P."/>
            <person name="Kyung K."/>
            <person name="Warren W."/>
            <person name="Fulton R."/>
            <person name="Feng D."/>
            <person name="Wollam A."/>
            <person name="Shah N."/>
            <person name="Bhonagiri V."/>
            <person name="Nash W.E."/>
            <person name="Hallsworth-Pepin K."/>
            <person name="Wilson R.K."/>
            <person name="McClelland M."/>
            <person name="Forsythe S.J."/>
        </authorList>
    </citation>
    <scope>NUCLEOTIDE SEQUENCE [LARGE SCALE GENOMIC DNA]</scope>
    <source>
        <strain>ATCC BAA-894</strain>
    </source>
</reference>
<proteinExistence type="inferred from homology"/>
<protein>
    <recommendedName>
        <fullName evidence="1">4-hydroxy-tetrahydrodipicolinate synthase</fullName>
        <shortName evidence="1">HTPA synthase</shortName>
        <ecNumber evidence="1">4.3.3.7</ecNumber>
    </recommendedName>
</protein>
<gene>
    <name evidence="1" type="primary">dapA</name>
    <name type="ordered locus">ESA_00771</name>
</gene>
<organism>
    <name type="scientific">Cronobacter sakazakii (strain ATCC BAA-894)</name>
    <name type="common">Enterobacter sakazakii</name>
    <dbReference type="NCBI Taxonomy" id="290339"/>
    <lineage>
        <taxon>Bacteria</taxon>
        <taxon>Pseudomonadati</taxon>
        <taxon>Pseudomonadota</taxon>
        <taxon>Gammaproteobacteria</taxon>
        <taxon>Enterobacterales</taxon>
        <taxon>Enterobacteriaceae</taxon>
        <taxon>Cronobacter</taxon>
    </lineage>
</organism>
<name>DAPA_CROS8</name>
<sequence length="292" mass="31373">MFTGSIVALITPMDEKGNVCRASLKKLIDYHVANGTSAIVSVGTTGESATLSHDEHADVVMMTLELADGRIPVIAGTGANATSEAISLTQRFNDSGIAGCLTVTPYYNRPTQEGLFQHFKAIAEHTDLPQILYNVPSRTGCDMLPETVGRLSKIKNIVGIKEATGNLSRVHLIKELVNEDFALLSGDDATAMDFMQLGGHGVISVTTNVAARDMADMCRLAAEGKFDDARIINRRLMPLHHKLFVEPNPVPVKWACKELGLVATDTLRLPMTPITDAGRDIVGSALKHAGLL</sequence>
<evidence type="ECO:0000255" key="1">
    <source>
        <dbReference type="HAMAP-Rule" id="MF_00418"/>
    </source>
</evidence>
<evidence type="ECO:0000305" key="2"/>
<dbReference type="EC" id="4.3.3.7" evidence="1"/>
<dbReference type="EMBL" id="CP000783">
    <property type="protein sequence ID" value="ABU76048.1"/>
    <property type="molecule type" value="Genomic_DNA"/>
</dbReference>
<dbReference type="RefSeq" id="WP_012124062.1">
    <property type="nucleotide sequence ID" value="NC_009778.1"/>
</dbReference>
<dbReference type="SMR" id="A7MP70"/>
<dbReference type="KEGG" id="esa:ESA_00771"/>
<dbReference type="PATRIC" id="fig|290339.8.peg.683"/>
<dbReference type="HOGENOM" id="CLU_049343_7_1_6"/>
<dbReference type="UniPathway" id="UPA00034">
    <property type="reaction ID" value="UER00017"/>
</dbReference>
<dbReference type="Proteomes" id="UP000000260">
    <property type="component" value="Chromosome"/>
</dbReference>
<dbReference type="GO" id="GO:0005829">
    <property type="term" value="C:cytosol"/>
    <property type="evidence" value="ECO:0007669"/>
    <property type="project" value="TreeGrafter"/>
</dbReference>
<dbReference type="GO" id="GO:0008840">
    <property type="term" value="F:4-hydroxy-tetrahydrodipicolinate synthase activity"/>
    <property type="evidence" value="ECO:0007669"/>
    <property type="project" value="UniProtKB-UniRule"/>
</dbReference>
<dbReference type="GO" id="GO:0019877">
    <property type="term" value="P:diaminopimelate biosynthetic process"/>
    <property type="evidence" value="ECO:0007669"/>
    <property type="project" value="UniProtKB-UniRule"/>
</dbReference>
<dbReference type="GO" id="GO:0009089">
    <property type="term" value="P:lysine biosynthetic process via diaminopimelate"/>
    <property type="evidence" value="ECO:0007669"/>
    <property type="project" value="UniProtKB-UniRule"/>
</dbReference>
<dbReference type="CDD" id="cd00950">
    <property type="entry name" value="DHDPS"/>
    <property type="match status" value="1"/>
</dbReference>
<dbReference type="FunFam" id="3.20.20.70:FF:000046">
    <property type="entry name" value="4-hydroxy-tetrahydrodipicolinate synthase"/>
    <property type="match status" value="1"/>
</dbReference>
<dbReference type="Gene3D" id="3.20.20.70">
    <property type="entry name" value="Aldolase class I"/>
    <property type="match status" value="1"/>
</dbReference>
<dbReference type="HAMAP" id="MF_00418">
    <property type="entry name" value="DapA"/>
    <property type="match status" value="1"/>
</dbReference>
<dbReference type="InterPro" id="IPR013785">
    <property type="entry name" value="Aldolase_TIM"/>
</dbReference>
<dbReference type="InterPro" id="IPR005263">
    <property type="entry name" value="DapA"/>
</dbReference>
<dbReference type="InterPro" id="IPR002220">
    <property type="entry name" value="DapA-like"/>
</dbReference>
<dbReference type="InterPro" id="IPR020625">
    <property type="entry name" value="Schiff_base-form_aldolases_AS"/>
</dbReference>
<dbReference type="InterPro" id="IPR020624">
    <property type="entry name" value="Schiff_base-form_aldolases_CS"/>
</dbReference>
<dbReference type="NCBIfam" id="TIGR00674">
    <property type="entry name" value="dapA"/>
    <property type="match status" value="1"/>
</dbReference>
<dbReference type="PANTHER" id="PTHR12128:SF66">
    <property type="entry name" value="4-HYDROXY-2-OXOGLUTARATE ALDOLASE, MITOCHONDRIAL"/>
    <property type="match status" value="1"/>
</dbReference>
<dbReference type="PANTHER" id="PTHR12128">
    <property type="entry name" value="DIHYDRODIPICOLINATE SYNTHASE"/>
    <property type="match status" value="1"/>
</dbReference>
<dbReference type="Pfam" id="PF00701">
    <property type="entry name" value="DHDPS"/>
    <property type="match status" value="1"/>
</dbReference>
<dbReference type="PIRSF" id="PIRSF001365">
    <property type="entry name" value="DHDPS"/>
    <property type="match status" value="1"/>
</dbReference>
<dbReference type="PRINTS" id="PR00146">
    <property type="entry name" value="DHPICSNTHASE"/>
</dbReference>
<dbReference type="SMART" id="SM01130">
    <property type="entry name" value="DHDPS"/>
    <property type="match status" value="1"/>
</dbReference>
<dbReference type="SUPFAM" id="SSF51569">
    <property type="entry name" value="Aldolase"/>
    <property type="match status" value="1"/>
</dbReference>
<dbReference type="PROSITE" id="PS00665">
    <property type="entry name" value="DHDPS_1"/>
    <property type="match status" value="1"/>
</dbReference>
<dbReference type="PROSITE" id="PS00666">
    <property type="entry name" value="DHDPS_2"/>
    <property type="match status" value="1"/>
</dbReference>
<keyword id="KW-0028">Amino-acid biosynthesis</keyword>
<keyword id="KW-0963">Cytoplasm</keyword>
<keyword id="KW-0220">Diaminopimelate biosynthesis</keyword>
<keyword id="KW-0456">Lyase</keyword>
<keyword id="KW-0457">Lysine biosynthesis</keyword>
<keyword id="KW-1185">Reference proteome</keyword>
<keyword id="KW-0704">Schiff base</keyword>
<comment type="function">
    <text evidence="1">Catalyzes the condensation of (S)-aspartate-beta-semialdehyde [(S)-ASA] and pyruvate to 4-hydroxy-tetrahydrodipicolinate (HTPA).</text>
</comment>
<comment type="catalytic activity">
    <reaction evidence="1">
        <text>L-aspartate 4-semialdehyde + pyruvate = (2S,4S)-4-hydroxy-2,3,4,5-tetrahydrodipicolinate + H2O + H(+)</text>
        <dbReference type="Rhea" id="RHEA:34171"/>
        <dbReference type="ChEBI" id="CHEBI:15361"/>
        <dbReference type="ChEBI" id="CHEBI:15377"/>
        <dbReference type="ChEBI" id="CHEBI:15378"/>
        <dbReference type="ChEBI" id="CHEBI:67139"/>
        <dbReference type="ChEBI" id="CHEBI:537519"/>
        <dbReference type="EC" id="4.3.3.7"/>
    </reaction>
</comment>
<comment type="pathway">
    <text evidence="1">Amino-acid biosynthesis; L-lysine biosynthesis via DAP pathway; (S)-tetrahydrodipicolinate from L-aspartate: step 3/4.</text>
</comment>
<comment type="subunit">
    <text evidence="1">Homotetramer; dimer of dimers.</text>
</comment>
<comment type="subcellular location">
    <subcellularLocation>
        <location evidence="1">Cytoplasm</location>
    </subcellularLocation>
</comment>
<comment type="similarity">
    <text evidence="1">Belongs to the DapA family.</text>
</comment>
<comment type="caution">
    <text evidence="2">Was originally thought to be a dihydrodipicolinate synthase (DHDPS), catalyzing the condensation of (S)-aspartate-beta-semialdehyde [(S)-ASA] and pyruvate to dihydrodipicolinate (DHDP). However, it was shown in E.coli that the product of the enzymatic reaction is not dihydrodipicolinate but in fact (4S)-4-hydroxy-2,3,4,5-tetrahydro-(2S)-dipicolinic acid (HTPA), and that the consecutive dehydration reaction leading to DHDP is not spontaneous but catalyzed by DapB.</text>
</comment>
<feature type="chain" id="PRO_1000050188" description="4-hydroxy-tetrahydrodipicolinate synthase">
    <location>
        <begin position="1"/>
        <end position="292"/>
    </location>
</feature>
<feature type="active site" description="Proton donor/acceptor" evidence="1">
    <location>
        <position position="133"/>
    </location>
</feature>
<feature type="active site" description="Schiff-base intermediate with substrate" evidence="1">
    <location>
        <position position="161"/>
    </location>
</feature>
<feature type="binding site" evidence="1">
    <location>
        <position position="45"/>
    </location>
    <ligand>
        <name>pyruvate</name>
        <dbReference type="ChEBI" id="CHEBI:15361"/>
    </ligand>
</feature>
<feature type="binding site" evidence="1">
    <location>
        <position position="203"/>
    </location>
    <ligand>
        <name>pyruvate</name>
        <dbReference type="ChEBI" id="CHEBI:15361"/>
    </ligand>
</feature>
<feature type="site" description="Part of a proton relay during catalysis" evidence="1">
    <location>
        <position position="44"/>
    </location>
</feature>
<feature type="site" description="Part of a proton relay during catalysis" evidence="1">
    <location>
        <position position="107"/>
    </location>
</feature>